<comment type="function">
    <text evidence="1">Cell wall formation.</text>
</comment>
<comment type="catalytic activity">
    <reaction evidence="1">
        <text>UDP-N-acetyl-alpha-D-muramate + L-alanine + ATP = UDP-N-acetyl-alpha-D-muramoyl-L-alanine + ADP + phosphate + H(+)</text>
        <dbReference type="Rhea" id="RHEA:23372"/>
        <dbReference type="ChEBI" id="CHEBI:15378"/>
        <dbReference type="ChEBI" id="CHEBI:30616"/>
        <dbReference type="ChEBI" id="CHEBI:43474"/>
        <dbReference type="ChEBI" id="CHEBI:57972"/>
        <dbReference type="ChEBI" id="CHEBI:70757"/>
        <dbReference type="ChEBI" id="CHEBI:83898"/>
        <dbReference type="ChEBI" id="CHEBI:456216"/>
        <dbReference type="EC" id="6.3.2.8"/>
    </reaction>
</comment>
<comment type="pathway">
    <text evidence="1">Cell wall biogenesis; peptidoglycan biosynthesis.</text>
</comment>
<comment type="subcellular location">
    <subcellularLocation>
        <location evidence="1">Cytoplasm</location>
    </subcellularLocation>
</comment>
<comment type="similarity">
    <text evidence="1">Belongs to the MurCDEF family.</text>
</comment>
<name>MURC_BRUSI</name>
<accession>B0CHL9</accession>
<proteinExistence type="inferred from homology"/>
<evidence type="ECO:0000255" key="1">
    <source>
        <dbReference type="HAMAP-Rule" id="MF_00046"/>
    </source>
</evidence>
<gene>
    <name evidence="1" type="primary">murC</name>
    <name type="ordered locus">BSUIS_A1482</name>
</gene>
<keyword id="KW-0067">ATP-binding</keyword>
<keyword id="KW-0131">Cell cycle</keyword>
<keyword id="KW-0132">Cell division</keyword>
<keyword id="KW-0133">Cell shape</keyword>
<keyword id="KW-0961">Cell wall biogenesis/degradation</keyword>
<keyword id="KW-0963">Cytoplasm</keyword>
<keyword id="KW-0436">Ligase</keyword>
<keyword id="KW-0547">Nucleotide-binding</keyword>
<keyword id="KW-0573">Peptidoglycan synthesis</keyword>
<sequence length="471" mass="50794">MKMPLNIGLVHFIGIGGIGMSGIAEVLHNLGYKVQGSDQSDSANVQRLREKGIEVFVGHKAENLGDAEVIVVSTAIKKNNPELVAAREKLLPVVRRAEMLAELMRFRRAVAIGGTHGKTTTTSLVAALLDAGHLDPTVINGGIINAYGTNARMGDGDWMVVEADESDGTFLKLPADIAVVTNIDPEHLDHYGNFDAVRAAFRQFVENVPFYGFGVMCLDHPEVQALVSRIEDRRIITYGSNPQAEVRFVNQRMDGAASLFDVVIRSRKGEATEIKDLRLPMPGLHNVSNATAAIAVAHELGISSDDIRRGLGSFGGVKRRFTHTGSWNGVEIFDDYGHHPVEIRAVLKAAREATSQAGGRVVAIVQPHRYTRLASLFDEFAACFNDADTVIVAPVYTAGEEPIEGVNSEELVSRIKTAGHRDARYATGPEALAPLVASIAQAGDFVVCLGAGNVTQWAYALPKELAEQGKK</sequence>
<organism>
    <name type="scientific">Brucella suis (strain ATCC 23445 / NCTC 10510)</name>
    <dbReference type="NCBI Taxonomy" id="470137"/>
    <lineage>
        <taxon>Bacteria</taxon>
        <taxon>Pseudomonadati</taxon>
        <taxon>Pseudomonadota</taxon>
        <taxon>Alphaproteobacteria</taxon>
        <taxon>Hyphomicrobiales</taxon>
        <taxon>Brucellaceae</taxon>
        <taxon>Brucella/Ochrobactrum group</taxon>
        <taxon>Brucella</taxon>
    </lineage>
</organism>
<reference key="1">
    <citation type="submission" date="2007-12" db="EMBL/GenBank/DDBJ databases">
        <title>Brucella suis ATCC 23445 whole genome shotgun sequencing project.</title>
        <authorList>
            <person name="Setubal J.C."/>
            <person name="Bowns C."/>
            <person name="Boyle S."/>
            <person name="Crasta O.R."/>
            <person name="Czar M.J."/>
            <person name="Dharmanolla C."/>
            <person name="Gillespie J.J."/>
            <person name="Kenyon R.W."/>
            <person name="Lu J."/>
            <person name="Mane S."/>
            <person name="Mohapatra S."/>
            <person name="Nagrani S."/>
            <person name="Purkayastha A."/>
            <person name="Rajasimha H.K."/>
            <person name="Shallom J.M."/>
            <person name="Shallom S."/>
            <person name="Shukla M."/>
            <person name="Snyder E.E."/>
            <person name="Sobral B.W."/>
            <person name="Wattam A.R."/>
            <person name="Will R."/>
            <person name="Williams K."/>
            <person name="Yoo H."/>
            <person name="Bruce D."/>
            <person name="Detter C."/>
            <person name="Munk C."/>
            <person name="Brettin T.S."/>
        </authorList>
    </citation>
    <scope>NUCLEOTIDE SEQUENCE [LARGE SCALE GENOMIC DNA]</scope>
    <source>
        <strain>ATCC 23445 / NCTC 10510</strain>
    </source>
</reference>
<protein>
    <recommendedName>
        <fullName evidence="1">UDP-N-acetylmuramate--L-alanine ligase</fullName>
        <ecNumber evidence="1">6.3.2.8</ecNumber>
    </recommendedName>
    <alternativeName>
        <fullName evidence="1">UDP-N-acetylmuramoyl-L-alanine synthetase</fullName>
    </alternativeName>
</protein>
<feature type="chain" id="PRO_1000074731" description="UDP-N-acetylmuramate--L-alanine ligase">
    <location>
        <begin position="1"/>
        <end position="471"/>
    </location>
</feature>
<feature type="binding site" evidence="1">
    <location>
        <begin position="114"/>
        <end position="120"/>
    </location>
    <ligand>
        <name>ATP</name>
        <dbReference type="ChEBI" id="CHEBI:30616"/>
    </ligand>
</feature>
<dbReference type="EC" id="6.3.2.8" evidence="1"/>
<dbReference type="EMBL" id="CP000911">
    <property type="protein sequence ID" value="ABY38520.1"/>
    <property type="molecule type" value="Genomic_DNA"/>
</dbReference>
<dbReference type="RefSeq" id="WP_002964538.1">
    <property type="nucleotide sequence ID" value="NC_010169.1"/>
</dbReference>
<dbReference type="SMR" id="B0CHL9"/>
<dbReference type="GeneID" id="97533364"/>
<dbReference type="KEGG" id="bmt:BSUIS_A1482"/>
<dbReference type="HOGENOM" id="CLU_028104_2_2_5"/>
<dbReference type="UniPathway" id="UPA00219"/>
<dbReference type="Proteomes" id="UP000008545">
    <property type="component" value="Chromosome I"/>
</dbReference>
<dbReference type="GO" id="GO:0005737">
    <property type="term" value="C:cytoplasm"/>
    <property type="evidence" value="ECO:0007669"/>
    <property type="project" value="UniProtKB-SubCell"/>
</dbReference>
<dbReference type="GO" id="GO:0005524">
    <property type="term" value="F:ATP binding"/>
    <property type="evidence" value="ECO:0007669"/>
    <property type="project" value="UniProtKB-UniRule"/>
</dbReference>
<dbReference type="GO" id="GO:0008763">
    <property type="term" value="F:UDP-N-acetylmuramate-L-alanine ligase activity"/>
    <property type="evidence" value="ECO:0007669"/>
    <property type="project" value="UniProtKB-UniRule"/>
</dbReference>
<dbReference type="GO" id="GO:0051301">
    <property type="term" value="P:cell division"/>
    <property type="evidence" value="ECO:0007669"/>
    <property type="project" value="UniProtKB-KW"/>
</dbReference>
<dbReference type="GO" id="GO:0071555">
    <property type="term" value="P:cell wall organization"/>
    <property type="evidence" value="ECO:0007669"/>
    <property type="project" value="UniProtKB-KW"/>
</dbReference>
<dbReference type="GO" id="GO:0009252">
    <property type="term" value="P:peptidoglycan biosynthetic process"/>
    <property type="evidence" value="ECO:0007669"/>
    <property type="project" value="UniProtKB-UniRule"/>
</dbReference>
<dbReference type="GO" id="GO:0008360">
    <property type="term" value="P:regulation of cell shape"/>
    <property type="evidence" value="ECO:0007669"/>
    <property type="project" value="UniProtKB-KW"/>
</dbReference>
<dbReference type="Gene3D" id="3.90.190.20">
    <property type="entry name" value="Mur ligase, C-terminal domain"/>
    <property type="match status" value="1"/>
</dbReference>
<dbReference type="Gene3D" id="3.40.1190.10">
    <property type="entry name" value="Mur-like, catalytic domain"/>
    <property type="match status" value="1"/>
</dbReference>
<dbReference type="Gene3D" id="3.40.50.720">
    <property type="entry name" value="NAD(P)-binding Rossmann-like Domain"/>
    <property type="match status" value="1"/>
</dbReference>
<dbReference type="HAMAP" id="MF_00046">
    <property type="entry name" value="MurC"/>
    <property type="match status" value="1"/>
</dbReference>
<dbReference type="InterPro" id="IPR036565">
    <property type="entry name" value="Mur-like_cat_sf"/>
</dbReference>
<dbReference type="InterPro" id="IPR004101">
    <property type="entry name" value="Mur_ligase_C"/>
</dbReference>
<dbReference type="InterPro" id="IPR036615">
    <property type="entry name" value="Mur_ligase_C_dom_sf"/>
</dbReference>
<dbReference type="InterPro" id="IPR013221">
    <property type="entry name" value="Mur_ligase_cen"/>
</dbReference>
<dbReference type="InterPro" id="IPR000713">
    <property type="entry name" value="Mur_ligase_N"/>
</dbReference>
<dbReference type="InterPro" id="IPR050061">
    <property type="entry name" value="MurCDEF_pg_biosynth"/>
</dbReference>
<dbReference type="InterPro" id="IPR005758">
    <property type="entry name" value="UDP-N-AcMur_Ala_ligase_MurC"/>
</dbReference>
<dbReference type="NCBIfam" id="TIGR01082">
    <property type="entry name" value="murC"/>
    <property type="match status" value="1"/>
</dbReference>
<dbReference type="PANTHER" id="PTHR43445:SF3">
    <property type="entry name" value="UDP-N-ACETYLMURAMATE--L-ALANINE LIGASE"/>
    <property type="match status" value="1"/>
</dbReference>
<dbReference type="PANTHER" id="PTHR43445">
    <property type="entry name" value="UDP-N-ACETYLMURAMATE--L-ALANINE LIGASE-RELATED"/>
    <property type="match status" value="1"/>
</dbReference>
<dbReference type="Pfam" id="PF01225">
    <property type="entry name" value="Mur_ligase"/>
    <property type="match status" value="1"/>
</dbReference>
<dbReference type="Pfam" id="PF02875">
    <property type="entry name" value="Mur_ligase_C"/>
    <property type="match status" value="1"/>
</dbReference>
<dbReference type="Pfam" id="PF08245">
    <property type="entry name" value="Mur_ligase_M"/>
    <property type="match status" value="1"/>
</dbReference>
<dbReference type="SUPFAM" id="SSF51984">
    <property type="entry name" value="MurCD N-terminal domain"/>
    <property type="match status" value="1"/>
</dbReference>
<dbReference type="SUPFAM" id="SSF53623">
    <property type="entry name" value="MurD-like peptide ligases, catalytic domain"/>
    <property type="match status" value="1"/>
</dbReference>
<dbReference type="SUPFAM" id="SSF53244">
    <property type="entry name" value="MurD-like peptide ligases, peptide-binding domain"/>
    <property type="match status" value="1"/>
</dbReference>